<feature type="chain" id="PRO_0000201567" description="Heme exporter protein D">
    <location>
        <begin position="1"/>
        <end position="67"/>
    </location>
</feature>
<feature type="transmembrane region" description="Helical" evidence="1">
    <location>
        <begin position="17"/>
        <end position="35"/>
    </location>
</feature>
<sequence length="67" mass="7847">MFFQTWSDFFNMGGYGFYVWLSYAVSLVAVIALIVQSVKQRKTVLQNVLREKQREERLQQANKGNTL</sequence>
<proteinExistence type="inferred from homology"/>
<evidence type="ECO:0000255" key="1"/>
<evidence type="ECO:0000305" key="2"/>
<organism>
    <name type="scientific">Haemophilus influenzae (strain ATCC 51907 / DSM 11121 / KW20 / Rd)</name>
    <dbReference type="NCBI Taxonomy" id="71421"/>
    <lineage>
        <taxon>Bacteria</taxon>
        <taxon>Pseudomonadati</taxon>
        <taxon>Pseudomonadota</taxon>
        <taxon>Gammaproteobacteria</taxon>
        <taxon>Pasteurellales</taxon>
        <taxon>Pasteurellaceae</taxon>
        <taxon>Haemophilus</taxon>
    </lineage>
</organism>
<keyword id="KW-0997">Cell inner membrane</keyword>
<keyword id="KW-1003">Cell membrane</keyword>
<keyword id="KW-0201">Cytochrome c-type biogenesis</keyword>
<keyword id="KW-0472">Membrane</keyword>
<keyword id="KW-1185">Reference proteome</keyword>
<keyword id="KW-0812">Transmembrane</keyword>
<keyword id="KW-1133">Transmembrane helix</keyword>
<keyword id="KW-0813">Transport</keyword>
<comment type="function">
    <text evidence="2">Required for the export of heme to the periplasm for the biogenesis of c-type cytochromes.</text>
</comment>
<comment type="subcellular location">
    <subcellularLocation>
        <location evidence="2">Cell inner membrane</location>
        <topology evidence="2">Single-pass membrane protein</topology>
    </subcellularLocation>
</comment>
<comment type="similarity">
    <text evidence="2">Belongs to the CcmD/CycX/HelD family.</text>
</comment>
<reference key="1">
    <citation type="journal article" date="1995" name="Science">
        <title>Whole-genome random sequencing and assembly of Haemophilus influenzae Rd.</title>
        <authorList>
            <person name="Fleischmann R.D."/>
            <person name="Adams M.D."/>
            <person name="White O."/>
            <person name="Clayton R.A."/>
            <person name="Kirkness E.F."/>
            <person name="Kerlavage A.R."/>
            <person name="Bult C.J."/>
            <person name="Tomb J.-F."/>
            <person name="Dougherty B.A."/>
            <person name="Merrick J.M."/>
            <person name="McKenney K."/>
            <person name="Sutton G.G."/>
            <person name="FitzHugh W."/>
            <person name="Fields C.A."/>
            <person name="Gocayne J.D."/>
            <person name="Scott J.D."/>
            <person name="Shirley R."/>
            <person name="Liu L.-I."/>
            <person name="Glodek A."/>
            <person name="Kelley J.M."/>
            <person name="Weidman J.F."/>
            <person name="Phillips C.A."/>
            <person name="Spriggs T."/>
            <person name="Hedblom E."/>
            <person name="Cotton M.D."/>
            <person name="Utterback T.R."/>
            <person name="Hanna M.C."/>
            <person name="Nguyen D.T."/>
            <person name="Saudek D.M."/>
            <person name="Brandon R.C."/>
            <person name="Fine L.D."/>
            <person name="Fritchman J.L."/>
            <person name="Fuhrmann J.L."/>
            <person name="Geoghagen N.S.M."/>
            <person name="Gnehm C.L."/>
            <person name="McDonald L.A."/>
            <person name="Small K.V."/>
            <person name="Fraser C.M."/>
            <person name="Smith H.O."/>
            <person name="Venter J.C."/>
        </authorList>
    </citation>
    <scope>NUCLEOTIDE SEQUENCE [LARGE SCALE GENOMIC DNA]</scope>
    <source>
        <strain>ATCC 51907 / DSM 11121 / KW20 / Rd</strain>
    </source>
</reference>
<protein>
    <recommendedName>
        <fullName>Heme exporter protein D</fullName>
    </recommendedName>
    <alternativeName>
        <fullName>Cytochrome c-type biogenesis protein CcmD</fullName>
    </alternativeName>
</protein>
<gene>
    <name type="primary">ccmD</name>
    <name type="ordered locus">HI_1092</name>
</gene>
<dbReference type="EMBL" id="L42023">
    <property type="protein sequence ID" value="AAC22749.1"/>
    <property type="molecule type" value="Genomic_DNA"/>
</dbReference>
<dbReference type="PIR" id="H64166">
    <property type="entry name" value="H64166"/>
</dbReference>
<dbReference type="RefSeq" id="NP_439249.1">
    <property type="nucleotide sequence ID" value="NC_000907.1"/>
</dbReference>
<dbReference type="SMR" id="P45035"/>
<dbReference type="STRING" id="71421.HI_1092"/>
<dbReference type="EnsemblBacteria" id="AAC22749">
    <property type="protein sequence ID" value="AAC22749"/>
    <property type="gene ID" value="HI_1092"/>
</dbReference>
<dbReference type="KEGG" id="hin:HI_1092"/>
<dbReference type="PATRIC" id="fig|71421.8.peg.1137"/>
<dbReference type="eggNOG" id="COG3114">
    <property type="taxonomic scope" value="Bacteria"/>
</dbReference>
<dbReference type="HOGENOM" id="CLU_180892_0_1_6"/>
<dbReference type="OrthoDB" id="9815607at2"/>
<dbReference type="PhylomeDB" id="P45035"/>
<dbReference type="BioCyc" id="HINF71421:G1GJ1-1127-MONOMER"/>
<dbReference type="Proteomes" id="UP000000579">
    <property type="component" value="Chromosome"/>
</dbReference>
<dbReference type="GO" id="GO:0005886">
    <property type="term" value="C:plasma membrane"/>
    <property type="evidence" value="ECO:0007669"/>
    <property type="project" value="UniProtKB-SubCell"/>
</dbReference>
<dbReference type="GO" id="GO:1903607">
    <property type="term" value="P:cytochrome c biosynthetic process"/>
    <property type="evidence" value="ECO:0000318"/>
    <property type="project" value="GO_Central"/>
</dbReference>
<dbReference type="GO" id="GO:0017004">
    <property type="term" value="P:cytochrome complex assembly"/>
    <property type="evidence" value="ECO:0007669"/>
    <property type="project" value="UniProtKB-KW"/>
</dbReference>
<dbReference type="GO" id="GO:0015886">
    <property type="term" value="P:heme transport"/>
    <property type="evidence" value="ECO:0007669"/>
    <property type="project" value="InterPro"/>
</dbReference>
<dbReference type="InterPro" id="IPR007078">
    <property type="entry name" value="Haem_export_protD_CcmD"/>
</dbReference>
<dbReference type="InterPro" id="IPR052075">
    <property type="entry name" value="Heme_exporter_D"/>
</dbReference>
<dbReference type="NCBIfam" id="TIGR03141">
    <property type="entry name" value="cytochro_ccmD"/>
    <property type="match status" value="1"/>
</dbReference>
<dbReference type="PANTHER" id="PTHR37531">
    <property type="entry name" value="HEME EXPORTER PROTEIN D"/>
    <property type="match status" value="1"/>
</dbReference>
<dbReference type="PANTHER" id="PTHR37531:SF1">
    <property type="entry name" value="HEME EXPORTER PROTEIN D"/>
    <property type="match status" value="1"/>
</dbReference>
<dbReference type="Pfam" id="PF04995">
    <property type="entry name" value="CcmD"/>
    <property type="match status" value="1"/>
</dbReference>
<name>CCMD_HAEIN</name>
<accession>P45035</accession>